<reference key="1">
    <citation type="journal article" date="2005" name="Jpn. Agric. Res. Q.">
        <title>Genome sequence of Xanthomonas oryzae pv. oryzae suggests contribution of large numbers of effector genes and insertion sequences to its race diversity.</title>
        <authorList>
            <person name="Ochiai H."/>
            <person name="Inoue Y."/>
            <person name="Takeya M."/>
            <person name="Sasaki A."/>
            <person name="Kaku H."/>
        </authorList>
    </citation>
    <scope>NUCLEOTIDE SEQUENCE [LARGE SCALE GENOMIC DNA]</scope>
    <source>
        <strain>MAFF 311018</strain>
    </source>
</reference>
<proteinExistence type="inferred from homology"/>
<gene>
    <name evidence="1" type="primary">tolB</name>
    <name type="ordered locus">XOO1552</name>
</gene>
<keyword id="KW-0131">Cell cycle</keyword>
<keyword id="KW-0132">Cell division</keyword>
<keyword id="KW-0574">Periplasm</keyword>
<keyword id="KW-0732">Signal</keyword>
<comment type="function">
    <text evidence="1">Part of the Tol-Pal system, which plays a role in outer membrane invagination during cell division and is important for maintaining outer membrane integrity.</text>
</comment>
<comment type="subunit">
    <text evidence="1">The Tol-Pal system is composed of five core proteins: the inner membrane proteins TolA, TolQ and TolR, the periplasmic protein TolB and the outer membrane protein Pal. They form a network linking the inner and outer membranes and the peptidoglycan layer.</text>
</comment>
<comment type="subcellular location">
    <subcellularLocation>
        <location evidence="1">Periplasm</location>
    </subcellularLocation>
</comment>
<comment type="similarity">
    <text evidence="1">Belongs to the TolB family.</text>
</comment>
<accession>Q2P570</accession>
<organism>
    <name type="scientific">Xanthomonas oryzae pv. oryzae (strain MAFF 311018)</name>
    <dbReference type="NCBI Taxonomy" id="342109"/>
    <lineage>
        <taxon>Bacteria</taxon>
        <taxon>Pseudomonadati</taxon>
        <taxon>Pseudomonadota</taxon>
        <taxon>Gammaproteobacteria</taxon>
        <taxon>Lysobacterales</taxon>
        <taxon>Lysobacteraceae</taxon>
        <taxon>Xanthomonas</taxon>
    </lineage>
</organism>
<name>TOLB_XANOM</name>
<sequence length="439" mass="47083">MKKPLRWLAALTVLLLPLSALAQQQGLTIDIVGGSASATPIAVIPMPYQGSGTAPQTDVSAVVGADLDRSGQFRTLPAAQIVEKPTRGTEVQFQTWRTLKQNYIVVGRVMNAGEGAYRVEYELFDVAKGERMLGLAMTARANAMRDVSHQMADAIYEKITGVRGAFWTRIAYVTASGKGGAMRYALMVADSDGYNPQTIVRSAEPLLSPNWSPDGKKLAYVSFERGNSSIYLQDIATGARELVSSFRGINGAPSFSPDGRRLALALSRSGNPEIYVMDLGSKQLTQLTNHFGIDTEPTWAPDGGSIYFTSDRGGRPQIYQVAASGGSANRVTFQGNYNATASVSFDGKKIAVAQGSGNTYRIAMMDRSLGSPSWSTLSPGSLDESPSFAPNASMVLYAAREGGRGVLYAVSSDARVRQRLVLADGDVREPAWGPYRTAH</sequence>
<feature type="signal peptide" evidence="1">
    <location>
        <begin position="1"/>
        <end position="22"/>
    </location>
</feature>
<feature type="chain" id="PRO_0000259099" description="Tol-Pal system protein TolB" evidence="1">
    <location>
        <begin position="23"/>
        <end position="439"/>
    </location>
</feature>
<dbReference type="EMBL" id="AP008229">
    <property type="protein sequence ID" value="BAE68307.1"/>
    <property type="molecule type" value="Genomic_DNA"/>
</dbReference>
<dbReference type="RefSeq" id="WP_011408115.1">
    <property type="nucleotide sequence ID" value="NC_007705.1"/>
</dbReference>
<dbReference type="SMR" id="Q2P570"/>
<dbReference type="KEGG" id="xom:XOO1552"/>
<dbReference type="HOGENOM" id="CLU_047123_0_0_6"/>
<dbReference type="GO" id="GO:0042597">
    <property type="term" value="C:periplasmic space"/>
    <property type="evidence" value="ECO:0007669"/>
    <property type="project" value="UniProtKB-SubCell"/>
</dbReference>
<dbReference type="GO" id="GO:0051301">
    <property type="term" value="P:cell division"/>
    <property type="evidence" value="ECO:0007669"/>
    <property type="project" value="UniProtKB-UniRule"/>
</dbReference>
<dbReference type="GO" id="GO:0017038">
    <property type="term" value="P:protein import"/>
    <property type="evidence" value="ECO:0007669"/>
    <property type="project" value="InterPro"/>
</dbReference>
<dbReference type="Gene3D" id="2.120.10.30">
    <property type="entry name" value="TolB, C-terminal domain"/>
    <property type="match status" value="1"/>
</dbReference>
<dbReference type="Gene3D" id="3.40.50.10070">
    <property type="entry name" value="TolB, N-terminal domain"/>
    <property type="match status" value="1"/>
</dbReference>
<dbReference type="HAMAP" id="MF_00671">
    <property type="entry name" value="TolB"/>
    <property type="match status" value="1"/>
</dbReference>
<dbReference type="InterPro" id="IPR011042">
    <property type="entry name" value="6-blade_b-propeller_TolB-like"/>
</dbReference>
<dbReference type="InterPro" id="IPR011659">
    <property type="entry name" value="PD40"/>
</dbReference>
<dbReference type="InterPro" id="IPR014167">
    <property type="entry name" value="Tol-Pal_TolB"/>
</dbReference>
<dbReference type="InterPro" id="IPR007195">
    <property type="entry name" value="TolB_N"/>
</dbReference>
<dbReference type="NCBIfam" id="TIGR02800">
    <property type="entry name" value="propeller_TolB"/>
    <property type="match status" value="1"/>
</dbReference>
<dbReference type="PANTHER" id="PTHR36842:SF1">
    <property type="entry name" value="PROTEIN TOLB"/>
    <property type="match status" value="1"/>
</dbReference>
<dbReference type="PANTHER" id="PTHR36842">
    <property type="entry name" value="PROTEIN TOLB HOMOLOG"/>
    <property type="match status" value="1"/>
</dbReference>
<dbReference type="Pfam" id="PF07676">
    <property type="entry name" value="PD40"/>
    <property type="match status" value="3"/>
</dbReference>
<dbReference type="Pfam" id="PF04052">
    <property type="entry name" value="TolB_N"/>
    <property type="match status" value="1"/>
</dbReference>
<dbReference type="SUPFAM" id="SSF52964">
    <property type="entry name" value="TolB, N-terminal domain"/>
    <property type="match status" value="1"/>
</dbReference>
<dbReference type="SUPFAM" id="SSF69304">
    <property type="entry name" value="Tricorn protease N-terminal domain"/>
    <property type="match status" value="1"/>
</dbReference>
<protein>
    <recommendedName>
        <fullName evidence="1">Tol-Pal system protein TolB</fullName>
    </recommendedName>
</protein>
<evidence type="ECO:0000255" key="1">
    <source>
        <dbReference type="HAMAP-Rule" id="MF_00671"/>
    </source>
</evidence>